<dbReference type="EMBL" id="CP000026">
    <property type="protein sequence ID" value="AAV78416.1"/>
    <property type="molecule type" value="Genomic_DNA"/>
</dbReference>
<dbReference type="RefSeq" id="WP_001518569.1">
    <property type="nucleotide sequence ID" value="NC_006511.1"/>
</dbReference>
<dbReference type="SMR" id="Q5PFG2"/>
<dbReference type="GeneID" id="66757102"/>
<dbReference type="KEGG" id="spt:SPA2547"/>
<dbReference type="HOGENOM" id="CLU_108953_3_0_6"/>
<dbReference type="Proteomes" id="UP000008185">
    <property type="component" value="Chromosome"/>
</dbReference>
<dbReference type="GO" id="GO:0005829">
    <property type="term" value="C:cytosol"/>
    <property type="evidence" value="ECO:0007669"/>
    <property type="project" value="TreeGrafter"/>
</dbReference>
<dbReference type="GO" id="GO:0003723">
    <property type="term" value="F:RNA binding"/>
    <property type="evidence" value="ECO:0007669"/>
    <property type="project" value="UniProtKB-UniRule"/>
</dbReference>
<dbReference type="GO" id="GO:0070929">
    <property type="term" value="P:trans-translation"/>
    <property type="evidence" value="ECO:0007669"/>
    <property type="project" value="UniProtKB-UniRule"/>
</dbReference>
<dbReference type="CDD" id="cd09294">
    <property type="entry name" value="SmpB"/>
    <property type="match status" value="1"/>
</dbReference>
<dbReference type="FunFam" id="2.40.280.10:FF:000001">
    <property type="entry name" value="SsrA-binding protein"/>
    <property type="match status" value="1"/>
</dbReference>
<dbReference type="Gene3D" id="2.40.280.10">
    <property type="match status" value="1"/>
</dbReference>
<dbReference type="HAMAP" id="MF_00023">
    <property type="entry name" value="SmpB"/>
    <property type="match status" value="1"/>
</dbReference>
<dbReference type="InterPro" id="IPR023620">
    <property type="entry name" value="SmpB"/>
</dbReference>
<dbReference type="InterPro" id="IPR000037">
    <property type="entry name" value="SsrA-bd_prot"/>
</dbReference>
<dbReference type="InterPro" id="IPR020081">
    <property type="entry name" value="SsrA-bd_prot_CS"/>
</dbReference>
<dbReference type="NCBIfam" id="NF003843">
    <property type="entry name" value="PRK05422.1"/>
    <property type="match status" value="1"/>
</dbReference>
<dbReference type="NCBIfam" id="TIGR00086">
    <property type="entry name" value="smpB"/>
    <property type="match status" value="1"/>
</dbReference>
<dbReference type="PANTHER" id="PTHR30308:SF2">
    <property type="entry name" value="SSRA-BINDING PROTEIN"/>
    <property type="match status" value="1"/>
</dbReference>
<dbReference type="PANTHER" id="PTHR30308">
    <property type="entry name" value="TMRNA-BINDING COMPONENT OF TRANS-TRANSLATION TAGGING COMPLEX"/>
    <property type="match status" value="1"/>
</dbReference>
<dbReference type="Pfam" id="PF01668">
    <property type="entry name" value="SmpB"/>
    <property type="match status" value="1"/>
</dbReference>
<dbReference type="SUPFAM" id="SSF74982">
    <property type="entry name" value="Small protein B (SmpB)"/>
    <property type="match status" value="1"/>
</dbReference>
<dbReference type="PROSITE" id="PS01317">
    <property type="entry name" value="SSRP"/>
    <property type="match status" value="1"/>
</dbReference>
<protein>
    <recommendedName>
        <fullName evidence="1">SsrA-binding protein</fullName>
    </recommendedName>
    <alternativeName>
        <fullName evidence="1">Small protein B</fullName>
    </alternativeName>
</protein>
<reference key="1">
    <citation type="journal article" date="2004" name="Nat. Genet.">
        <title>Comparison of genome degradation in Paratyphi A and Typhi, human-restricted serovars of Salmonella enterica that cause typhoid.</title>
        <authorList>
            <person name="McClelland M."/>
            <person name="Sanderson K.E."/>
            <person name="Clifton S.W."/>
            <person name="Latreille P."/>
            <person name="Porwollik S."/>
            <person name="Sabo A."/>
            <person name="Meyer R."/>
            <person name="Bieri T."/>
            <person name="Ozersky P."/>
            <person name="McLellan M."/>
            <person name="Harkins C.R."/>
            <person name="Wang C."/>
            <person name="Nguyen C."/>
            <person name="Berghoff A."/>
            <person name="Elliott G."/>
            <person name="Kohlberg S."/>
            <person name="Strong C."/>
            <person name="Du F."/>
            <person name="Carter J."/>
            <person name="Kremizki C."/>
            <person name="Layman D."/>
            <person name="Leonard S."/>
            <person name="Sun H."/>
            <person name="Fulton L."/>
            <person name="Nash W."/>
            <person name="Miner T."/>
            <person name="Minx P."/>
            <person name="Delehaunty K."/>
            <person name="Fronick C."/>
            <person name="Magrini V."/>
            <person name="Nhan M."/>
            <person name="Warren W."/>
            <person name="Florea L."/>
            <person name="Spieth J."/>
            <person name="Wilson R.K."/>
        </authorList>
    </citation>
    <scope>NUCLEOTIDE SEQUENCE [LARGE SCALE GENOMIC DNA]</scope>
    <source>
        <strain>ATCC 9150 / SARB42</strain>
    </source>
</reference>
<sequence length="160" mass="18232">MTKKKAHKPGSATIALNKRARHEYFIEEEFEAGLALQGWEVKSLRAGKANIGDSYVILKDGEAWLFGANFTPMAVASTHVVCDPTRTRKLLLNQRELDSLYGRINREGYTVVALSLYWKNAWCKVKIGVAKGKKQHDKRSDLKEREWQLDKARIMKNAGR</sequence>
<comment type="function">
    <text evidence="1">Required for rescue of stalled ribosomes mediated by trans-translation. Binds to transfer-messenger RNA (tmRNA), required for stable association of tmRNA with ribosomes. tmRNA and SmpB together mimic tRNA shape, replacing the anticodon stem-loop with SmpB. tmRNA is encoded by the ssrA gene; the 2 termini fold to resemble tRNA(Ala) and it encodes a 'tag peptide', a short internal open reading frame. During trans-translation Ala-aminoacylated tmRNA acts like a tRNA, entering the A-site of stalled ribosomes, displacing the stalled mRNA. The ribosome then switches to translate the ORF on the tmRNA; the nascent peptide is terminated with the 'tag peptide' encoded by the tmRNA and targeted for degradation. The ribosome is freed to recommence translation, which seems to be the essential function of trans-translation.</text>
</comment>
<comment type="subcellular location">
    <subcellularLocation>
        <location evidence="1">Cytoplasm</location>
    </subcellularLocation>
    <text evidence="1">The tmRNA-SmpB complex associates with stalled 70S ribosomes.</text>
</comment>
<comment type="similarity">
    <text evidence="1">Belongs to the SmpB family.</text>
</comment>
<proteinExistence type="inferred from homology"/>
<evidence type="ECO:0000255" key="1">
    <source>
        <dbReference type="HAMAP-Rule" id="MF_00023"/>
    </source>
</evidence>
<feature type="chain" id="PRO_0000103021" description="SsrA-binding protein">
    <location>
        <begin position="1"/>
        <end position="160"/>
    </location>
</feature>
<keyword id="KW-0963">Cytoplasm</keyword>
<keyword id="KW-0694">RNA-binding</keyword>
<gene>
    <name evidence="1" type="primary">smpB</name>
    <name type="ordered locus">SPA2547</name>
</gene>
<organism>
    <name type="scientific">Salmonella paratyphi A (strain ATCC 9150 / SARB42)</name>
    <dbReference type="NCBI Taxonomy" id="295319"/>
    <lineage>
        <taxon>Bacteria</taxon>
        <taxon>Pseudomonadati</taxon>
        <taxon>Pseudomonadota</taxon>
        <taxon>Gammaproteobacteria</taxon>
        <taxon>Enterobacterales</taxon>
        <taxon>Enterobacteriaceae</taxon>
        <taxon>Salmonella</taxon>
    </lineage>
</organism>
<name>SSRP_SALPA</name>
<accession>Q5PFG2</accession>